<name>RL23_CALS4</name>
<sequence length="96" mass="11165">MEARDIIIRPVITEKSMNLMGDRKYTFIVDKRANKIEIKKAVEEIFGVKVEKVYTMNYKGKPKRMGKYEGRTESYKKAIVKLAPDSKGIEFFEGLQ</sequence>
<organism>
    <name type="scientific">Caldanaerobacter subterraneus subsp. tengcongensis (strain DSM 15242 / JCM 11007 / NBRC 100824 / MB4)</name>
    <name type="common">Thermoanaerobacter tengcongensis</name>
    <dbReference type="NCBI Taxonomy" id="273068"/>
    <lineage>
        <taxon>Bacteria</taxon>
        <taxon>Bacillati</taxon>
        <taxon>Bacillota</taxon>
        <taxon>Clostridia</taxon>
        <taxon>Thermoanaerobacterales</taxon>
        <taxon>Thermoanaerobacteraceae</taxon>
        <taxon>Caldanaerobacter</taxon>
    </lineage>
</organism>
<evidence type="ECO:0000255" key="1">
    <source>
        <dbReference type="HAMAP-Rule" id="MF_01369"/>
    </source>
</evidence>
<evidence type="ECO:0000305" key="2"/>
<feature type="chain" id="PRO_0000272863" description="Large ribosomal subunit protein uL23">
    <location>
        <begin position="1"/>
        <end position="96"/>
    </location>
</feature>
<reference key="1">
    <citation type="journal article" date="2002" name="Genome Res.">
        <title>A complete sequence of the T. tengcongensis genome.</title>
        <authorList>
            <person name="Bao Q."/>
            <person name="Tian Y."/>
            <person name="Li W."/>
            <person name="Xu Z."/>
            <person name="Xuan Z."/>
            <person name="Hu S."/>
            <person name="Dong W."/>
            <person name="Yang J."/>
            <person name="Chen Y."/>
            <person name="Xue Y."/>
            <person name="Xu Y."/>
            <person name="Lai X."/>
            <person name="Huang L."/>
            <person name="Dong X."/>
            <person name="Ma Y."/>
            <person name="Ling L."/>
            <person name="Tan H."/>
            <person name="Chen R."/>
            <person name="Wang J."/>
            <person name="Yu J."/>
            <person name="Yang H."/>
        </authorList>
    </citation>
    <scope>NUCLEOTIDE SEQUENCE [LARGE SCALE GENOMIC DNA]</scope>
    <source>
        <strain>DSM 15242 / JCM 11007 / NBRC 100824 / MB4</strain>
    </source>
</reference>
<comment type="function">
    <text evidence="1">One of the early assembly proteins it binds 23S rRNA. One of the proteins that surrounds the polypeptide exit tunnel on the outside of the ribosome. Forms the main docking site for trigger factor binding to the ribosome.</text>
</comment>
<comment type="subunit">
    <text evidence="1">Part of the 50S ribosomal subunit. Contacts protein L29, and trigger factor when it is bound to the ribosome.</text>
</comment>
<comment type="similarity">
    <text evidence="1">Belongs to the universal ribosomal protein uL23 family.</text>
</comment>
<dbReference type="EMBL" id="AE008691">
    <property type="protein sequence ID" value="AAM25433.1"/>
    <property type="molecule type" value="Genomic_DNA"/>
</dbReference>
<dbReference type="RefSeq" id="WP_011026336.1">
    <property type="nucleotide sequence ID" value="NZ_JANUCV010000001.1"/>
</dbReference>
<dbReference type="SMR" id="Q8R7V6"/>
<dbReference type="STRING" id="273068.TTE2291"/>
<dbReference type="KEGG" id="tte:TTE2291"/>
<dbReference type="eggNOG" id="COG0089">
    <property type="taxonomic scope" value="Bacteria"/>
</dbReference>
<dbReference type="HOGENOM" id="CLU_037562_3_2_9"/>
<dbReference type="OrthoDB" id="9793353at2"/>
<dbReference type="Proteomes" id="UP000000555">
    <property type="component" value="Chromosome"/>
</dbReference>
<dbReference type="GO" id="GO:1990904">
    <property type="term" value="C:ribonucleoprotein complex"/>
    <property type="evidence" value="ECO:0007669"/>
    <property type="project" value="UniProtKB-KW"/>
</dbReference>
<dbReference type="GO" id="GO:0005840">
    <property type="term" value="C:ribosome"/>
    <property type="evidence" value="ECO:0007669"/>
    <property type="project" value="UniProtKB-KW"/>
</dbReference>
<dbReference type="GO" id="GO:0019843">
    <property type="term" value="F:rRNA binding"/>
    <property type="evidence" value="ECO:0007669"/>
    <property type="project" value="UniProtKB-UniRule"/>
</dbReference>
<dbReference type="GO" id="GO:0003735">
    <property type="term" value="F:structural constituent of ribosome"/>
    <property type="evidence" value="ECO:0007669"/>
    <property type="project" value="InterPro"/>
</dbReference>
<dbReference type="GO" id="GO:0006412">
    <property type="term" value="P:translation"/>
    <property type="evidence" value="ECO:0007669"/>
    <property type="project" value="UniProtKB-UniRule"/>
</dbReference>
<dbReference type="FunFam" id="3.30.70.330:FF:000001">
    <property type="entry name" value="50S ribosomal protein L23"/>
    <property type="match status" value="1"/>
</dbReference>
<dbReference type="Gene3D" id="3.30.70.330">
    <property type="match status" value="1"/>
</dbReference>
<dbReference type="HAMAP" id="MF_01369_B">
    <property type="entry name" value="Ribosomal_uL23_B"/>
    <property type="match status" value="1"/>
</dbReference>
<dbReference type="InterPro" id="IPR012677">
    <property type="entry name" value="Nucleotide-bd_a/b_plait_sf"/>
</dbReference>
<dbReference type="InterPro" id="IPR013025">
    <property type="entry name" value="Ribosomal_uL23-like"/>
</dbReference>
<dbReference type="InterPro" id="IPR012678">
    <property type="entry name" value="Ribosomal_uL23/eL15/eS24_sf"/>
</dbReference>
<dbReference type="InterPro" id="IPR001014">
    <property type="entry name" value="Ribosomal_uL23_CS"/>
</dbReference>
<dbReference type="NCBIfam" id="NF004363">
    <property type="entry name" value="PRK05738.2-4"/>
    <property type="match status" value="1"/>
</dbReference>
<dbReference type="PANTHER" id="PTHR11620">
    <property type="entry name" value="60S RIBOSOMAL PROTEIN L23A"/>
    <property type="match status" value="1"/>
</dbReference>
<dbReference type="Pfam" id="PF00276">
    <property type="entry name" value="Ribosomal_L23"/>
    <property type="match status" value="1"/>
</dbReference>
<dbReference type="SUPFAM" id="SSF54189">
    <property type="entry name" value="Ribosomal proteins S24e, L23 and L15e"/>
    <property type="match status" value="1"/>
</dbReference>
<dbReference type="PROSITE" id="PS00050">
    <property type="entry name" value="RIBOSOMAL_L23"/>
    <property type="match status" value="1"/>
</dbReference>
<gene>
    <name evidence="1" type="primary">rplW</name>
    <name type="ordered locus">TTE2291</name>
</gene>
<accession>Q8R7V6</accession>
<proteinExistence type="inferred from homology"/>
<protein>
    <recommendedName>
        <fullName evidence="1">Large ribosomal subunit protein uL23</fullName>
    </recommendedName>
    <alternativeName>
        <fullName evidence="2">50S ribosomal protein L23</fullName>
    </alternativeName>
</protein>
<keyword id="KW-1185">Reference proteome</keyword>
<keyword id="KW-0687">Ribonucleoprotein</keyword>
<keyword id="KW-0689">Ribosomal protein</keyword>
<keyword id="KW-0694">RNA-binding</keyword>
<keyword id="KW-0699">rRNA-binding</keyword>